<proteinExistence type="evidence at transcript level"/>
<keyword id="KW-0539">Nucleus</keyword>
<keyword id="KW-0597">Phosphoprotein</keyword>
<keyword id="KW-1185">Reference proteome</keyword>
<name>CA174_RAT</name>
<feature type="chain" id="PRO_0000294246" description="UPF0688 protein C1orf174 homolog">
    <location>
        <begin position="1"/>
        <end position="222"/>
    </location>
</feature>
<feature type="region of interest" description="Disordered" evidence="3">
    <location>
        <begin position="23"/>
        <end position="57"/>
    </location>
</feature>
<feature type="region of interest" description="Disordered" evidence="3">
    <location>
        <begin position="98"/>
        <end position="158"/>
    </location>
</feature>
<feature type="compositionally biased region" description="Polar residues" evidence="3">
    <location>
        <begin position="33"/>
        <end position="48"/>
    </location>
</feature>
<feature type="compositionally biased region" description="Basic and acidic residues" evidence="3">
    <location>
        <begin position="121"/>
        <end position="131"/>
    </location>
</feature>
<feature type="modified residue" description="Phosphoserine" evidence="2">
    <location>
        <position position="172"/>
    </location>
</feature>
<accession>Q5M951</accession>
<comment type="subcellular location">
    <subcellularLocation>
        <location evidence="1">Nucleus</location>
    </subcellularLocation>
</comment>
<comment type="similarity">
    <text evidence="4">Belongs to the UPF0688 family.</text>
</comment>
<organism>
    <name type="scientific">Rattus norvegicus</name>
    <name type="common">Rat</name>
    <dbReference type="NCBI Taxonomy" id="10116"/>
    <lineage>
        <taxon>Eukaryota</taxon>
        <taxon>Metazoa</taxon>
        <taxon>Chordata</taxon>
        <taxon>Craniata</taxon>
        <taxon>Vertebrata</taxon>
        <taxon>Euteleostomi</taxon>
        <taxon>Mammalia</taxon>
        <taxon>Eutheria</taxon>
        <taxon>Euarchontoglires</taxon>
        <taxon>Glires</taxon>
        <taxon>Rodentia</taxon>
        <taxon>Myomorpha</taxon>
        <taxon>Muroidea</taxon>
        <taxon>Muridae</taxon>
        <taxon>Murinae</taxon>
        <taxon>Rattus</taxon>
    </lineage>
</organism>
<dbReference type="EMBL" id="BC087640">
    <property type="protein sequence ID" value="AAH87640.1"/>
    <property type="molecule type" value="mRNA"/>
</dbReference>
<dbReference type="RefSeq" id="NP_001009711.1">
    <property type="nucleotide sequence ID" value="NM_001009711.1"/>
</dbReference>
<dbReference type="FunCoup" id="Q5M951">
    <property type="interactions" value="1413"/>
</dbReference>
<dbReference type="STRING" id="10116.ENSRNOP00000038852"/>
<dbReference type="iPTMnet" id="Q5M951"/>
<dbReference type="PhosphoSitePlus" id="Q5M951"/>
<dbReference type="PaxDb" id="10116-ENSRNOP00000038852"/>
<dbReference type="GeneID" id="362671"/>
<dbReference type="KEGG" id="rno:362671"/>
<dbReference type="UCSC" id="RGD:1304567">
    <property type="organism name" value="rat"/>
</dbReference>
<dbReference type="AGR" id="RGD:1304567"/>
<dbReference type="CTD" id="362671"/>
<dbReference type="RGD" id="1304567">
    <property type="gene designation" value="C5h1orf174"/>
</dbReference>
<dbReference type="eggNOG" id="ENOG502SANK">
    <property type="taxonomic scope" value="Eukaryota"/>
</dbReference>
<dbReference type="InParanoid" id="Q5M951"/>
<dbReference type="OrthoDB" id="84728at9989"/>
<dbReference type="PhylomeDB" id="Q5M951"/>
<dbReference type="PRO" id="PR:Q5M951"/>
<dbReference type="Proteomes" id="UP000002494">
    <property type="component" value="Unplaced"/>
</dbReference>
<dbReference type="GO" id="GO:0005634">
    <property type="term" value="C:nucleus"/>
    <property type="evidence" value="ECO:0007669"/>
    <property type="project" value="UniProtKB-SubCell"/>
</dbReference>
<dbReference type="InterPro" id="IPR031530">
    <property type="entry name" value="UPF0688"/>
</dbReference>
<dbReference type="PANTHER" id="PTHR28491">
    <property type="entry name" value="UPF0688 PROTEIN C1ORF174"/>
    <property type="match status" value="1"/>
</dbReference>
<dbReference type="PANTHER" id="PTHR28491:SF1">
    <property type="entry name" value="UPF0688 PROTEIN C1ORF174"/>
    <property type="match status" value="1"/>
</dbReference>
<dbReference type="Pfam" id="PF15772">
    <property type="entry name" value="UPF0688"/>
    <property type="match status" value="1"/>
</dbReference>
<protein>
    <recommendedName>
        <fullName>UPF0688 protein C1orf174 homolog</fullName>
    </recommendedName>
</protein>
<sequence>MRSRKLTGGVRSSARLRARSCSSTSLASAGDIASSTSAKTTCLASSSHKATDRRTSKKFKYDKGHLLKAELQKVDPKSDISSLPKVVPVAPCENKFAEDGAEAAVPAPENTAPPQGCSKPVSEEPSVKAEEGLPTAPRSAAAAQETHDSSASQAEPVPVLQMDSSVFLDDDSNQPMPVSRFFGNVELMQDLPPASSSCPSMSRREFRKMHFRAKDDDEDAEG</sequence>
<evidence type="ECO:0000250" key="1"/>
<evidence type="ECO:0000250" key="2">
    <source>
        <dbReference type="UniProtKB" id="Q8IYL3"/>
    </source>
</evidence>
<evidence type="ECO:0000256" key="3">
    <source>
        <dbReference type="SAM" id="MobiDB-lite"/>
    </source>
</evidence>
<evidence type="ECO:0000305" key="4"/>
<reference key="1">
    <citation type="journal article" date="2004" name="Genome Res.">
        <title>The status, quality, and expansion of the NIH full-length cDNA project: the Mammalian Gene Collection (MGC).</title>
        <authorList>
            <consortium name="The MGC Project Team"/>
        </authorList>
    </citation>
    <scope>NUCLEOTIDE SEQUENCE [LARGE SCALE MRNA]</scope>
    <source>
        <tissue>Ovary</tissue>
    </source>
</reference>